<reference key="1">
    <citation type="submission" date="2005-07" db="EMBL/GenBank/DDBJ databases">
        <title>Complete sequence of Synechococcus sp. CC9605.</title>
        <authorList>
            <consortium name="US DOE Joint Genome Institute"/>
            <person name="Copeland A."/>
            <person name="Lucas S."/>
            <person name="Lapidus A."/>
            <person name="Barry K."/>
            <person name="Detter J.C."/>
            <person name="Glavina T."/>
            <person name="Hammon N."/>
            <person name="Israni S."/>
            <person name="Pitluck S."/>
            <person name="Schmutz J."/>
            <person name="Martinez M."/>
            <person name="Larimer F."/>
            <person name="Land M."/>
            <person name="Kyrpides N."/>
            <person name="Ivanova N."/>
            <person name="Richardson P."/>
        </authorList>
    </citation>
    <scope>NUCLEOTIDE SEQUENCE [LARGE SCALE GENOMIC DNA]</scope>
    <source>
        <strain>CC9605</strain>
    </source>
</reference>
<dbReference type="EC" id="6.1.1.-" evidence="1"/>
<dbReference type="EMBL" id="CP000110">
    <property type="protein sequence ID" value="ABB35831.1"/>
    <property type="molecule type" value="Genomic_DNA"/>
</dbReference>
<dbReference type="RefSeq" id="WP_011365040.1">
    <property type="nucleotide sequence ID" value="NC_007516.1"/>
</dbReference>
<dbReference type="SMR" id="Q3AHV1"/>
<dbReference type="STRING" id="110662.Syncc9605_2091"/>
<dbReference type="KEGG" id="syd:Syncc9605_2091"/>
<dbReference type="eggNOG" id="COG0008">
    <property type="taxonomic scope" value="Bacteria"/>
</dbReference>
<dbReference type="HOGENOM" id="CLU_015768_0_0_3"/>
<dbReference type="OrthoDB" id="9807503at2"/>
<dbReference type="GO" id="GO:0005829">
    <property type="term" value="C:cytosol"/>
    <property type="evidence" value="ECO:0007669"/>
    <property type="project" value="TreeGrafter"/>
</dbReference>
<dbReference type="GO" id="GO:0005524">
    <property type="term" value="F:ATP binding"/>
    <property type="evidence" value="ECO:0007669"/>
    <property type="project" value="UniProtKB-KW"/>
</dbReference>
<dbReference type="GO" id="GO:0004818">
    <property type="term" value="F:glutamate-tRNA ligase activity"/>
    <property type="evidence" value="ECO:0007669"/>
    <property type="project" value="TreeGrafter"/>
</dbReference>
<dbReference type="GO" id="GO:0008270">
    <property type="term" value="F:zinc ion binding"/>
    <property type="evidence" value="ECO:0007669"/>
    <property type="project" value="UniProtKB-UniRule"/>
</dbReference>
<dbReference type="GO" id="GO:0006424">
    <property type="term" value="P:glutamyl-tRNA aminoacylation"/>
    <property type="evidence" value="ECO:0007669"/>
    <property type="project" value="InterPro"/>
</dbReference>
<dbReference type="GO" id="GO:0006400">
    <property type="term" value="P:tRNA modification"/>
    <property type="evidence" value="ECO:0007669"/>
    <property type="project" value="InterPro"/>
</dbReference>
<dbReference type="Gene3D" id="3.40.50.620">
    <property type="entry name" value="HUPs"/>
    <property type="match status" value="1"/>
</dbReference>
<dbReference type="HAMAP" id="MF_01428">
    <property type="entry name" value="Glu_Q_tRNA_synth"/>
    <property type="match status" value="1"/>
</dbReference>
<dbReference type="InterPro" id="IPR001412">
    <property type="entry name" value="aa-tRNA-synth_I_CS"/>
</dbReference>
<dbReference type="InterPro" id="IPR022380">
    <property type="entry name" value="Glu-Q_tRNA(Asp)_Synthase"/>
</dbReference>
<dbReference type="InterPro" id="IPR000924">
    <property type="entry name" value="Glu/Gln-tRNA-synth"/>
</dbReference>
<dbReference type="InterPro" id="IPR020058">
    <property type="entry name" value="Glu/Gln-tRNA-synth_Ib_cat-dom"/>
</dbReference>
<dbReference type="InterPro" id="IPR049940">
    <property type="entry name" value="GluQ/Sye"/>
</dbReference>
<dbReference type="InterPro" id="IPR014729">
    <property type="entry name" value="Rossmann-like_a/b/a_fold"/>
</dbReference>
<dbReference type="NCBIfam" id="NF004314">
    <property type="entry name" value="PRK05710.1-3"/>
    <property type="match status" value="1"/>
</dbReference>
<dbReference type="PANTHER" id="PTHR43311">
    <property type="entry name" value="GLUTAMATE--TRNA LIGASE"/>
    <property type="match status" value="1"/>
</dbReference>
<dbReference type="PANTHER" id="PTHR43311:SF1">
    <property type="entry name" value="GLUTAMYL-Q TRNA(ASP) SYNTHETASE"/>
    <property type="match status" value="1"/>
</dbReference>
<dbReference type="Pfam" id="PF00749">
    <property type="entry name" value="tRNA-synt_1c"/>
    <property type="match status" value="2"/>
</dbReference>
<dbReference type="PRINTS" id="PR00987">
    <property type="entry name" value="TRNASYNTHGLU"/>
</dbReference>
<dbReference type="SUPFAM" id="SSF52374">
    <property type="entry name" value="Nucleotidylyl transferase"/>
    <property type="match status" value="1"/>
</dbReference>
<dbReference type="PROSITE" id="PS00178">
    <property type="entry name" value="AA_TRNA_LIGASE_I"/>
    <property type="match status" value="1"/>
</dbReference>
<protein>
    <recommendedName>
        <fullName evidence="1">Glutamyl-Q tRNA(Asp) synthetase</fullName>
        <shortName evidence="1">Glu-Q-RSs</shortName>
        <ecNumber evidence="1">6.1.1.-</ecNumber>
    </recommendedName>
</protein>
<proteinExistence type="inferred from homology"/>
<accession>Q3AHV1</accession>
<comment type="function">
    <text evidence="1">Catalyzes the tRNA-independent activation of glutamate in presence of ATP and the subsequent transfer of glutamate onto a tRNA(Asp). Glutamate is transferred on the 2-amino-5-(4,5-dihydroxy-2-cyclopenten-1-yl) moiety of the queuosine in the wobble position of the QUC anticodon.</text>
</comment>
<comment type="cofactor">
    <cofactor evidence="1">
        <name>Zn(2+)</name>
        <dbReference type="ChEBI" id="CHEBI:29105"/>
    </cofactor>
    <text evidence="1">Binds 1 zinc ion per subunit.</text>
</comment>
<comment type="similarity">
    <text evidence="1">Belongs to the class-I aminoacyl-tRNA synthetase family. GluQ subfamily.</text>
</comment>
<feature type="chain" id="PRO_1000024369" description="Glutamyl-Q tRNA(Asp) synthetase">
    <location>
        <begin position="1"/>
        <end position="293"/>
    </location>
</feature>
<feature type="short sequence motif" description="'HIGH' region">
    <location>
        <begin position="29"/>
        <end position="39"/>
    </location>
</feature>
<feature type="short sequence motif" description="'KMSKS' region">
    <location>
        <begin position="234"/>
        <end position="238"/>
    </location>
</feature>
<feature type="binding site" evidence="1">
    <location>
        <begin position="26"/>
        <end position="30"/>
    </location>
    <ligand>
        <name>L-glutamate</name>
        <dbReference type="ChEBI" id="CHEBI:29985"/>
    </ligand>
</feature>
<feature type="binding site" evidence="1">
    <location>
        <position position="62"/>
    </location>
    <ligand>
        <name>L-glutamate</name>
        <dbReference type="ChEBI" id="CHEBI:29985"/>
    </ligand>
</feature>
<feature type="binding site" evidence="1">
    <location>
        <position position="118"/>
    </location>
    <ligand>
        <name>Zn(2+)</name>
        <dbReference type="ChEBI" id="CHEBI:29105"/>
    </ligand>
</feature>
<feature type="binding site" evidence="1">
    <location>
        <position position="120"/>
    </location>
    <ligand>
        <name>Zn(2+)</name>
        <dbReference type="ChEBI" id="CHEBI:29105"/>
    </ligand>
</feature>
<feature type="binding site" evidence="1">
    <location>
        <position position="131"/>
    </location>
    <ligand>
        <name>Zn(2+)</name>
        <dbReference type="ChEBI" id="CHEBI:29105"/>
    </ligand>
</feature>
<feature type="binding site" evidence="1">
    <location>
        <position position="135"/>
    </location>
    <ligand>
        <name>Zn(2+)</name>
        <dbReference type="ChEBI" id="CHEBI:29105"/>
    </ligand>
</feature>
<feature type="binding site" evidence="1">
    <location>
        <position position="178"/>
    </location>
    <ligand>
        <name>L-glutamate</name>
        <dbReference type="ChEBI" id="CHEBI:29985"/>
    </ligand>
</feature>
<feature type="binding site" evidence="1">
    <location>
        <position position="196"/>
    </location>
    <ligand>
        <name>L-glutamate</name>
        <dbReference type="ChEBI" id="CHEBI:29985"/>
    </ligand>
</feature>
<feature type="binding site" evidence="1">
    <location>
        <position position="237"/>
    </location>
    <ligand>
        <name>ATP</name>
        <dbReference type="ChEBI" id="CHEBI:30616"/>
    </ligand>
</feature>
<name>GLUQ_SYNSC</name>
<evidence type="ECO:0000255" key="1">
    <source>
        <dbReference type="HAMAP-Rule" id="MF_01428"/>
    </source>
</evidence>
<sequence length="293" mass="32232">MALPEHLQRHLEAGRALTAAGGYRGRFAPSPTGLLHLGNLQTALLSWLAARQAGGAWLLRIDDLDTPRNRAGAIEAIQSDLRWLGLKWDGPVLLQSERRGIYHSWLSWLRRSGRLFACRCSRRELADQPIYSGFCRQAVHNWGWQRQRLPSWRLRVADDDPHGSGDVVLRRADGFIAYQLATVIDELSFGINDVVRGADLREALPAQRSLFAALGEAPPRFRHGPLLCDASGQKLSKREACAGLKPLRDAGLDAAAVIGRLASGLQLVAPEARISATELLEHLTQQAINAVIS</sequence>
<keyword id="KW-0030">Aminoacyl-tRNA synthetase</keyword>
<keyword id="KW-0067">ATP-binding</keyword>
<keyword id="KW-0436">Ligase</keyword>
<keyword id="KW-0479">Metal-binding</keyword>
<keyword id="KW-0547">Nucleotide-binding</keyword>
<keyword id="KW-0862">Zinc</keyword>
<organism>
    <name type="scientific">Synechococcus sp. (strain CC9605)</name>
    <dbReference type="NCBI Taxonomy" id="110662"/>
    <lineage>
        <taxon>Bacteria</taxon>
        <taxon>Bacillati</taxon>
        <taxon>Cyanobacteriota</taxon>
        <taxon>Cyanophyceae</taxon>
        <taxon>Synechococcales</taxon>
        <taxon>Synechococcaceae</taxon>
        <taxon>Synechococcus</taxon>
    </lineage>
</organism>
<gene>
    <name evidence="1" type="primary">gluQ</name>
    <name type="ordered locus">Syncc9605_2091</name>
</gene>